<proteinExistence type="inferred from homology"/>
<organismHost>
    <name type="scientific">Ornithodoros</name>
    <name type="common">relapsing fever ticks</name>
    <dbReference type="NCBI Taxonomy" id="6937"/>
</organismHost>
<organismHost>
    <name type="scientific">Phacochoerus aethiopicus</name>
    <name type="common">Warthog</name>
    <dbReference type="NCBI Taxonomy" id="85517"/>
</organismHost>
<organismHost>
    <name type="scientific">Phacochoerus africanus</name>
    <name type="common">Warthog</name>
    <dbReference type="NCBI Taxonomy" id="41426"/>
</organismHost>
<organismHost>
    <name type="scientific">Potamochoerus larvatus</name>
    <name type="common">Bushpig</name>
    <dbReference type="NCBI Taxonomy" id="273792"/>
</organismHost>
<organismHost>
    <name type="scientific">Sus scrofa</name>
    <name type="common">Pig</name>
    <dbReference type="NCBI Taxonomy" id="9823"/>
</organismHost>
<comment type="function">
    <text evidence="1">Plays a role in virus cell tropism, and may be required for efficient virus replication in macrophages. In addition, inhibits IFN-beta-induced IFN-stimulated genes (ISGs) transcription. Mechanistically, degrades host STAT1 and STAT2 through apoptosis and ubiquitin-proteasome pathways respectively.</text>
</comment>
<comment type="subunit">
    <text evidence="1">Interacts with host STAT1; this interaction mediates STAT1 degradation through apoptosis. Interacts with host STAT2; this interaction mediates STAT2 degradation through the proteasome.</text>
</comment>
<comment type="subcellular location">
    <subcellularLocation>
        <location evidence="1">Host cytoplasm</location>
    </subcellularLocation>
</comment>
<comment type="induction">
    <text evidence="2">Expressed in the early phase of the viral replicative cycle.</text>
</comment>
<comment type="similarity">
    <text evidence="2">Belongs to the asfivirus MGF 360 family.</text>
</comment>
<organism>
    <name type="scientific">African swine fever virus (isolate Pig/Kenya/KEN-50/1950)</name>
    <name type="common">ASFV</name>
    <dbReference type="NCBI Taxonomy" id="561445"/>
    <lineage>
        <taxon>Viruses</taxon>
        <taxon>Varidnaviria</taxon>
        <taxon>Bamfordvirae</taxon>
        <taxon>Nucleocytoviricota</taxon>
        <taxon>Pokkesviricetes</taxon>
        <taxon>Asfuvirales</taxon>
        <taxon>Asfarviridae</taxon>
        <taxon>Asfivirus</taxon>
        <taxon>African swine fever virus</taxon>
    </lineage>
</organism>
<feature type="chain" id="PRO_0000373269" description="Protein MGF 360-9L">
    <location>
        <begin position="1"/>
        <end position="319"/>
    </location>
</feature>
<protein>
    <recommendedName>
        <fullName>Protein MGF 360-9L</fullName>
    </recommendedName>
</protein>
<sequence>MLSLQTLAKKALAKQSVPEEYHYILKYCGLWWQNKPIHLCDYCNYVIVNSTPFKGELHLDVALIMAIKENNHDLIRLFTEWGANIYYGLSCARTEYTQELCRKLGAKDGLDKKDIFISLLHHKTSNNIILCHEIFNKNPMLEILNMQDFGEEIHRELKHLIFYILDNVPINTLNKYWYAIAVKYKLKRAISFFYQTYDHLNMWRLMCAISFNNVFDLHEIYEQKIVHMDIDKMMHLACMEDDNFLTIYYCFVLGADIDQAINVTLWHHQTNNLCFCKDLKDLKEQNGLTARPLLLPNITDPKKIYTMLKNYLPISSNSR</sequence>
<keyword id="KW-0244">Early protein</keyword>
<keyword id="KW-1035">Host cytoplasm</keyword>
<keyword id="KW-0945">Host-virus interaction</keyword>
<keyword id="KW-1090">Inhibition of host innate immune response by virus</keyword>
<keyword id="KW-1114">Inhibition of host interferon signaling pathway by virus</keyword>
<keyword id="KW-1105">Inhibition of host STAT1 by virus</keyword>
<keyword id="KW-1106">Inhibition of host STAT2 by virus</keyword>
<keyword id="KW-0922">Interferon antiviral system evasion</keyword>
<keyword id="KW-0899">Viral immunoevasion</keyword>
<accession>P0C9P1</accession>
<reference key="1">
    <citation type="submission" date="2003-03" db="EMBL/GenBank/DDBJ databases">
        <title>African swine fever virus genomes.</title>
        <authorList>
            <person name="Kutish G.F."/>
            <person name="Rock D.L."/>
        </authorList>
    </citation>
    <scope>NUCLEOTIDE SEQUENCE [LARGE SCALE GENOMIC DNA]</scope>
</reference>
<evidence type="ECO:0000250" key="1">
    <source>
        <dbReference type="UniProtKB" id="Q65137"/>
    </source>
</evidence>
<evidence type="ECO:0000305" key="2"/>
<name>3609L_ASFK5</name>
<dbReference type="EMBL" id="AY261360">
    <property type="status" value="NOT_ANNOTATED_CDS"/>
    <property type="molecule type" value="Genomic_DNA"/>
</dbReference>
<dbReference type="SMR" id="P0C9P1"/>
<dbReference type="Proteomes" id="UP000000861">
    <property type="component" value="Segment"/>
</dbReference>
<dbReference type="GO" id="GO:0030430">
    <property type="term" value="C:host cell cytoplasm"/>
    <property type="evidence" value="ECO:0007669"/>
    <property type="project" value="UniProtKB-SubCell"/>
</dbReference>
<dbReference type="GO" id="GO:0052170">
    <property type="term" value="P:symbiont-mediated suppression of host innate immune response"/>
    <property type="evidence" value="ECO:0007669"/>
    <property type="project" value="UniProtKB-KW"/>
</dbReference>
<dbReference type="GO" id="GO:0039563">
    <property type="term" value="P:symbiont-mediated suppression of host JAK-STAT cascade via inhibition of STAT1 activity"/>
    <property type="evidence" value="ECO:0007669"/>
    <property type="project" value="UniProtKB-KW"/>
</dbReference>
<dbReference type="GO" id="GO:0039564">
    <property type="term" value="P:symbiont-mediated suppression of host JAK-STAT cascade via inhibition of STAT2 activity"/>
    <property type="evidence" value="ECO:0007669"/>
    <property type="project" value="UniProtKB-KW"/>
</dbReference>
<dbReference type="GO" id="GO:0039502">
    <property type="term" value="P:symbiont-mediated suppression of host type I interferon-mediated signaling pathway"/>
    <property type="evidence" value="ECO:0007669"/>
    <property type="project" value="UniProtKB-KW"/>
</dbReference>
<dbReference type="GO" id="GO:0042330">
    <property type="term" value="P:taxis"/>
    <property type="evidence" value="ECO:0007669"/>
    <property type="project" value="InterPro"/>
</dbReference>
<dbReference type="InterPro" id="IPR002595">
    <property type="entry name" value="ASFV_MGF360"/>
</dbReference>
<dbReference type="Pfam" id="PF01671">
    <property type="entry name" value="ASFV_360"/>
    <property type="match status" value="1"/>
</dbReference>
<gene>
    <name type="ordered locus">032</name>
</gene>